<sequence length="161" mass="17252">MNIRIGHGFDVHKFGGGSPLLLGGVHIPYETGLIAHSDGDVVLHAISDAVLGAVALGDIGKHFPDTDEEFKGADSRHLLRHCYRLAKEKGYSMGNLDVTIIAQAPKMAPHIEAIREVLALDFETDTDNINVKATTTEKLGFTGRKEGIAVEAVVLLVKSAD</sequence>
<feature type="chain" id="PRO_1000075924" description="2-C-methyl-D-erythritol 2,4-cyclodiphosphate synthase">
    <location>
        <begin position="1"/>
        <end position="161"/>
    </location>
</feature>
<feature type="binding site" evidence="1">
    <location>
        <begin position="10"/>
        <end position="12"/>
    </location>
    <ligand>
        <name>4-CDP-2-C-methyl-D-erythritol 2-phosphate</name>
        <dbReference type="ChEBI" id="CHEBI:57919"/>
    </ligand>
</feature>
<feature type="binding site" evidence="1">
    <location>
        <position position="10"/>
    </location>
    <ligand>
        <name>a divalent metal cation</name>
        <dbReference type="ChEBI" id="CHEBI:60240"/>
    </ligand>
</feature>
<feature type="binding site" evidence="1">
    <location>
        <position position="12"/>
    </location>
    <ligand>
        <name>a divalent metal cation</name>
        <dbReference type="ChEBI" id="CHEBI:60240"/>
    </ligand>
</feature>
<feature type="binding site" evidence="1">
    <location>
        <begin position="36"/>
        <end position="37"/>
    </location>
    <ligand>
        <name>4-CDP-2-C-methyl-D-erythritol 2-phosphate</name>
        <dbReference type="ChEBI" id="CHEBI:57919"/>
    </ligand>
</feature>
<feature type="binding site" evidence="1">
    <location>
        <position position="44"/>
    </location>
    <ligand>
        <name>a divalent metal cation</name>
        <dbReference type="ChEBI" id="CHEBI:60240"/>
    </ligand>
</feature>
<feature type="binding site" evidence="1">
    <location>
        <begin position="58"/>
        <end position="60"/>
    </location>
    <ligand>
        <name>4-CDP-2-C-methyl-D-erythritol 2-phosphate</name>
        <dbReference type="ChEBI" id="CHEBI:57919"/>
    </ligand>
</feature>
<feature type="binding site" evidence="1">
    <location>
        <begin position="63"/>
        <end position="67"/>
    </location>
    <ligand>
        <name>4-CDP-2-C-methyl-D-erythritol 2-phosphate</name>
        <dbReference type="ChEBI" id="CHEBI:57919"/>
    </ligand>
</feature>
<feature type="binding site" evidence="1">
    <location>
        <begin position="102"/>
        <end position="108"/>
    </location>
    <ligand>
        <name>4-CDP-2-C-methyl-D-erythritol 2-phosphate</name>
        <dbReference type="ChEBI" id="CHEBI:57919"/>
    </ligand>
</feature>
<feature type="binding site" evidence="1">
    <location>
        <begin position="134"/>
        <end position="137"/>
    </location>
    <ligand>
        <name>4-CDP-2-C-methyl-D-erythritol 2-phosphate</name>
        <dbReference type="ChEBI" id="CHEBI:57919"/>
    </ligand>
</feature>
<feature type="binding site" evidence="1">
    <location>
        <position position="141"/>
    </location>
    <ligand>
        <name>4-CDP-2-C-methyl-D-erythritol 2-phosphate</name>
        <dbReference type="ChEBI" id="CHEBI:57919"/>
    </ligand>
</feature>
<feature type="binding site" evidence="1">
    <location>
        <position position="144"/>
    </location>
    <ligand>
        <name>4-CDP-2-C-methyl-D-erythritol 2-phosphate</name>
        <dbReference type="ChEBI" id="CHEBI:57919"/>
    </ligand>
</feature>
<feature type="site" description="Transition state stabilizer" evidence="1">
    <location>
        <position position="36"/>
    </location>
</feature>
<feature type="site" description="Transition state stabilizer" evidence="1">
    <location>
        <position position="135"/>
    </location>
</feature>
<organism>
    <name type="scientific">Shewanella sediminis (strain HAW-EB3)</name>
    <dbReference type="NCBI Taxonomy" id="425104"/>
    <lineage>
        <taxon>Bacteria</taxon>
        <taxon>Pseudomonadati</taxon>
        <taxon>Pseudomonadota</taxon>
        <taxon>Gammaproteobacteria</taxon>
        <taxon>Alteromonadales</taxon>
        <taxon>Shewanellaceae</taxon>
        <taxon>Shewanella</taxon>
    </lineage>
</organism>
<reference key="1">
    <citation type="submission" date="2007-08" db="EMBL/GenBank/DDBJ databases">
        <title>Complete sequence of Shewanella sediminis HAW-EB3.</title>
        <authorList>
            <consortium name="US DOE Joint Genome Institute"/>
            <person name="Copeland A."/>
            <person name="Lucas S."/>
            <person name="Lapidus A."/>
            <person name="Barry K."/>
            <person name="Glavina del Rio T."/>
            <person name="Dalin E."/>
            <person name="Tice H."/>
            <person name="Pitluck S."/>
            <person name="Chertkov O."/>
            <person name="Brettin T."/>
            <person name="Bruce D."/>
            <person name="Detter J.C."/>
            <person name="Han C."/>
            <person name="Schmutz J."/>
            <person name="Larimer F."/>
            <person name="Land M."/>
            <person name="Hauser L."/>
            <person name="Kyrpides N."/>
            <person name="Kim E."/>
            <person name="Zhao J.-S."/>
            <person name="Richardson P."/>
        </authorList>
    </citation>
    <scope>NUCLEOTIDE SEQUENCE [LARGE SCALE GENOMIC DNA]</scope>
    <source>
        <strain>HAW-EB3</strain>
    </source>
</reference>
<accession>A8FST1</accession>
<evidence type="ECO:0000255" key="1">
    <source>
        <dbReference type="HAMAP-Rule" id="MF_00107"/>
    </source>
</evidence>
<name>ISPF_SHESH</name>
<gene>
    <name evidence="1" type="primary">ispF</name>
    <name type="ordered locus">Ssed_1293</name>
</gene>
<protein>
    <recommendedName>
        <fullName evidence="1">2-C-methyl-D-erythritol 2,4-cyclodiphosphate synthase</fullName>
        <shortName evidence="1">MECDP-synthase</shortName>
        <shortName evidence="1">MECPP-synthase</shortName>
        <shortName evidence="1">MECPS</shortName>
        <ecNumber evidence="1">4.6.1.12</ecNumber>
    </recommendedName>
</protein>
<comment type="function">
    <text evidence="1">Involved in the biosynthesis of isopentenyl diphosphate (IPP) and dimethylallyl diphosphate (DMAPP), two major building blocks of isoprenoid compounds. Catalyzes the conversion of 4-diphosphocytidyl-2-C-methyl-D-erythritol 2-phosphate (CDP-ME2P) to 2-C-methyl-D-erythritol 2,4-cyclodiphosphate (ME-CPP) with a corresponding release of cytidine 5-monophosphate (CMP).</text>
</comment>
<comment type="catalytic activity">
    <reaction evidence="1">
        <text>4-CDP-2-C-methyl-D-erythritol 2-phosphate = 2-C-methyl-D-erythritol 2,4-cyclic diphosphate + CMP</text>
        <dbReference type="Rhea" id="RHEA:23864"/>
        <dbReference type="ChEBI" id="CHEBI:57919"/>
        <dbReference type="ChEBI" id="CHEBI:58483"/>
        <dbReference type="ChEBI" id="CHEBI:60377"/>
        <dbReference type="EC" id="4.6.1.12"/>
    </reaction>
</comment>
<comment type="cofactor">
    <cofactor evidence="1">
        <name>a divalent metal cation</name>
        <dbReference type="ChEBI" id="CHEBI:60240"/>
    </cofactor>
    <text evidence="1">Binds 1 divalent metal cation per subunit.</text>
</comment>
<comment type="pathway">
    <text evidence="1">Isoprenoid biosynthesis; isopentenyl diphosphate biosynthesis via DXP pathway; isopentenyl diphosphate from 1-deoxy-D-xylulose 5-phosphate: step 4/6.</text>
</comment>
<comment type="subunit">
    <text evidence="1">Homotrimer.</text>
</comment>
<comment type="similarity">
    <text evidence="1">Belongs to the IspF family.</text>
</comment>
<dbReference type="EC" id="4.6.1.12" evidence="1"/>
<dbReference type="EMBL" id="CP000821">
    <property type="protein sequence ID" value="ABV35904.1"/>
    <property type="molecule type" value="Genomic_DNA"/>
</dbReference>
<dbReference type="RefSeq" id="WP_012141640.1">
    <property type="nucleotide sequence ID" value="NC_009831.1"/>
</dbReference>
<dbReference type="SMR" id="A8FST1"/>
<dbReference type="STRING" id="425104.Ssed_1293"/>
<dbReference type="KEGG" id="sse:Ssed_1293"/>
<dbReference type="eggNOG" id="COG0245">
    <property type="taxonomic scope" value="Bacteria"/>
</dbReference>
<dbReference type="HOGENOM" id="CLU_084630_2_0_6"/>
<dbReference type="OrthoDB" id="9804336at2"/>
<dbReference type="UniPathway" id="UPA00056">
    <property type="reaction ID" value="UER00095"/>
</dbReference>
<dbReference type="Proteomes" id="UP000002015">
    <property type="component" value="Chromosome"/>
</dbReference>
<dbReference type="GO" id="GO:0008685">
    <property type="term" value="F:2-C-methyl-D-erythritol 2,4-cyclodiphosphate synthase activity"/>
    <property type="evidence" value="ECO:0007669"/>
    <property type="project" value="UniProtKB-UniRule"/>
</dbReference>
<dbReference type="GO" id="GO:0046872">
    <property type="term" value="F:metal ion binding"/>
    <property type="evidence" value="ECO:0007669"/>
    <property type="project" value="UniProtKB-KW"/>
</dbReference>
<dbReference type="GO" id="GO:0019288">
    <property type="term" value="P:isopentenyl diphosphate biosynthetic process, methylerythritol 4-phosphate pathway"/>
    <property type="evidence" value="ECO:0007669"/>
    <property type="project" value="UniProtKB-UniRule"/>
</dbReference>
<dbReference type="GO" id="GO:0016114">
    <property type="term" value="P:terpenoid biosynthetic process"/>
    <property type="evidence" value="ECO:0007669"/>
    <property type="project" value="InterPro"/>
</dbReference>
<dbReference type="CDD" id="cd00554">
    <property type="entry name" value="MECDP_synthase"/>
    <property type="match status" value="1"/>
</dbReference>
<dbReference type="FunFam" id="3.30.1330.50:FF:000001">
    <property type="entry name" value="2-C-methyl-D-erythritol 2,4-cyclodiphosphate synthase"/>
    <property type="match status" value="1"/>
</dbReference>
<dbReference type="Gene3D" id="3.30.1330.50">
    <property type="entry name" value="2-C-methyl-D-erythritol 2,4-cyclodiphosphate synthase"/>
    <property type="match status" value="1"/>
</dbReference>
<dbReference type="HAMAP" id="MF_00107">
    <property type="entry name" value="IspF"/>
    <property type="match status" value="1"/>
</dbReference>
<dbReference type="InterPro" id="IPR003526">
    <property type="entry name" value="MECDP_synthase"/>
</dbReference>
<dbReference type="InterPro" id="IPR020555">
    <property type="entry name" value="MECDP_synthase_CS"/>
</dbReference>
<dbReference type="InterPro" id="IPR036571">
    <property type="entry name" value="MECDP_synthase_sf"/>
</dbReference>
<dbReference type="NCBIfam" id="TIGR00151">
    <property type="entry name" value="ispF"/>
    <property type="match status" value="1"/>
</dbReference>
<dbReference type="PANTHER" id="PTHR43181">
    <property type="entry name" value="2-C-METHYL-D-ERYTHRITOL 2,4-CYCLODIPHOSPHATE SYNTHASE, CHLOROPLASTIC"/>
    <property type="match status" value="1"/>
</dbReference>
<dbReference type="PANTHER" id="PTHR43181:SF1">
    <property type="entry name" value="2-C-METHYL-D-ERYTHRITOL 2,4-CYCLODIPHOSPHATE SYNTHASE, CHLOROPLASTIC"/>
    <property type="match status" value="1"/>
</dbReference>
<dbReference type="Pfam" id="PF02542">
    <property type="entry name" value="YgbB"/>
    <property type="match status" value="1"/>
</dbReference>
<dbReference type="SUPFAM" id="SSF69765">
    <property type="entry name" value="IpsF-like"/>
    <property type="match status" value="1"/>
</dbReference>
<dbReference type="PROSITE" id="PS01350">
    <property type="entry name" value="ISPF"/>
    <property type="match status" value="1"/>
</dbReference>
<keyword id="KW-0414">Isoprene biosynthesis</keyword>
<keyword id="KW-0456">Lyase</keyword>
<keyword id="KW-0479">Metal-binding</keyword>
<keyword id="KW-1185">Reference proteome</keyword>
<proteinExistence type="inferred from homology"/>